<feature type="chain" id="PRO_0000348805" description="tRNA-cytidine(32) 2-sulfurtransferase">
    <location>
        <begin position="1"/>
        <end position="274"/>
    </location>
</feature>
<feature type="short sequence motif" description="PP-loop motif" evidence="1">
    <location>
        <begin position="40"/>
        <end position="45"/>
    </location>
</feature>
<feature type="binding site" evidence="1">
    <location>
        <position position="115"/>
    </location>
    <ligand>
        <name>[4Fe-4S] cluster</name>
        <dbReference type="ChEBI" id="CHEBI:49883"/>
    </ligand>
</feature>
<feature type="binding site" evidence="1">
    <location>
        <position position="118"/>
    </location>
    <ligand>
        <name>[4Fe-4S] cluster</name>
        <dbReference type="ChEBI" id="CHEBI:49883"/>
    </ligand>
</feature>
<feature type="binding site" evidence="1">
    <location>
        <position position="206"/>
    </location>
    <ligand>
        <name>[4Fe-4S] cluster</name>
        <dbReference type="ChEBI" id="CHEBI:49883"/>
    </ligand>
</feature>
<evidence type="ECO:0000255" key="1">
    <source>
        <dbReference type="HAMAP-Rule" id="MF_01850"/>
    </source>
</evidence>
<keyword id="KW-0004">4Fe-4S</keyword>
<keyword id="KW-0067">ATP-binding</keyword>
<keyword id="KW-0963">Cytoplasm</keyword>
<keyword id="KW-0408">Iron</keyword>
<keyword id="KW-0411">Iron-sulfur</keyword>
<keyword id="KW-0460">Magnesium</keyword>
<keyword id="KW-0479">Metal-binding</keyword>
<keyword id="KW-0547">Nucleotide-binding</keyword>
<keyword id="KW-1185">Reference proteome</keyword>
<keyword id="KW-0694">RNA-binding</keyword>
<keyword id="KW-0808">Transferase</keyword>
<keyword id="KW-0819">tRNA processing</keyword>
<keyword id="KW-0820">tRNA-binding</keyword>
<comment type="function">
    <text evidence="1">Catalyzes the ATP-dependent 2-thiolation of cytidine in position 32 of tRNA, to form 2-thiocytidine (s(2)C32). The sulfur atoms are provided by the cysteine/cysteine desulfurase (IscS) system.</text>
</comment>
<comment type="catalytic activity">
    <reaction evidence="1">
        <text>cytidine(32) in tRNA + S-sulfanyl-L-cysteinyl-[cysteine desulfurase] + AH2 + ATP = 2-thiocytidine(32) in tRNA + L-cysteinyl-[cysteine desulfurase] + A + AMP + diphosphate + H(+)</text>
        <dbReference type="Rhea" id="RHEA:57048"/>
        <dbReference type="Rhea" id="RHEA-COMP:10288"/>
        <dbReference type="Rhea" id="RHEA-COMP:12157"/>
        <dbReference type="Rhea" id="RHEA-COMP:12158"/>
        <dbReference type="Rhea" id="RHEA-COMP:14821"/>
        <dbReference type="ChEBI" id="CHEBI:13193"/>
        <dbReference type="ChEBI" id="CHEBI:15378"/>
        <dbReference type="ChEBI" id="CHEBI:17499"/>
        <dbReference type="ChEBI" id="CHEBI:29950"/>
        <dbReference type="ChEBI" id="CHEBI:30616"/>
        <dbReference type="ChEBI" id="CHEBI:33019"/>
        <dbReference type="ChEBI" id="CHEBI:61963"/>
        <dbReference type="ChEBI" id="CHEBI:82748"/>
        <dbReference type="ChEBI" id="CHEBI:141453"/>
        <dbReference type="ChEBI" id="CHEBI:456215"/>
    </reaction>
    <physiologicalReaction direction="left-to-right" evidence="1">
        <dbReference type="Rhea" id="RHEA:57049"/>
    </physiologicalReaction>
</comment>
<comment type="cofactor">
    <cofactor evidence="1">
        <name>Mg(2+)</name>
        <dbReference type="ChEBI" id="CHEBI:18420"/>
    </cofactor>
</comment>
<comment type="cofactor">
    <cofactor evidence="1">
        <name>[4Fe-4S] cluster</name>
        <dbReference type="ChEBI" id="CHEBI:49883"/>
    </cofactor>
    <text evidence="1">Binds 1 [4Fe-4S] cluster per subunit. The cluster is chelated by three Cys residues, the fourth Fe has a free coordination site that may bind a sulfur atom transferred from the persulfide of IscS.</text>
</comment>
<comment type="pathway">
    <text evidence="1">tRNA modification.</text>
</comment>
<comment type="subunit">
    <text evidence="1">Homodimer.</text>
</comment>
<comment type="subcellular location">
    <subcellularLocation>
        <location evidence="1">Cytoplasm</location>
    </subcellularLocation>
</comment>
<comment type="miscellaneous">
    <text evidence="1">The thiolation reaction likely consists of two steps: a first activation step by ATP to form an adenylated intermediate of the target base of tRNA, and a second nucleophilic substitution step of the sulfur (S) atom supplied by the hydrosulfide attached to the Fe-S cluster.</text>
</comment>
<comment type="similarity">
    <text evidence="1">Belongs to the TtcA family.</text>
</comment>
<reference key="1">
    <citation type="journal article" date="2003" name="Proc. Natl. Acad. Sci. U.S.A.">
        <title>The complete genome sequence of the Arabidopsis and tomato pathogen Pseudomonas syringae pv. tomato DC3000.</title>
        <authorList>
            <person name="Buell C.R."/>
            <person name="Joardar V."/>
            <person name="Lindeberg M."/>
            <person name="Selengut J."/>
            <person name="Paulsen I.T."/>
            <person name="Gwinn M.L."/>
            <person name="Dodson R.J."/>
            <person name="DeBoy R.T."/>
            <person name="Durkin A.S."/>
            <person name="Kolonay J.F."/>
            <person name="Madupu R."/>
            <person name="Daugherty S.C."/>
            <person name="Brinkac L.M."/>
            <person name="Beanan M.J."/>
            <person name="Haft D.H."/>
            <person name="Nelson W.C."/>
            <person name="Davidsen T.M."/>
            <person name="Zafar N."/>
            <person name="Zhou L."/>
            <person name="Liu J."/>
            <person name="Yuan Q."/>
            <person name="Khouri H.M."/>
            <person name="Fedorova N.B."/>
            <person name="Tran B."/>
            <person name="Russell D."/>
            <person name="Berry K.J."/>
            <person name="Utterback T.R."/>
            <person name="Van Aken S.E."/>
            <person name="Feldblyum T.V."/>
            <person name="D'Ascenzo M."/>
            <person name="Deng W.-L."/>
            <person name="Ramos A.R."/>
            <person name="Alfano J.R."/>
            <person name="Cartinhour S."/>
            <person name="Chatterjee A.K."/>
            <person name="Delaney T.P."/>
            <person name="Lazarowitz S.G."/>
            <person name="Martin G.B."/>
            <person name="Schneider D.J."/>
            <person name="Tang X."/>
            <person name="Bender C.L."/>
            <person name="White O."/>
            <person name="Fraser C.M."/>
            <person name="Collmer A."/>
        </authorList>
    </citation>
    <scope>NUCLEOTIDE SEQUENCE [LARGE SCALE GENOMIC DNA]</scope>
    <source>
        <strain>ATCC BAA-871 / DC3000</strain>
    </source>
</reference>
<name>TTCA_PSESM</name>
<gene>
    <name evidence="1" type="primary">ttcA</name>
    <name type="ordered locus">PSPTO_1684</name>
</gene>
<accession>Q885Z7</accession>
<organism>
    <name type="scientific">Pseudomonas syringae pv. tomato (strain ATCC BAA-871 / DC3000)</name>
    <dbReference type="NCBI Taxonomy" id="223283"/>
    <lineage>
        <taxon>Bacteria</taxon>
        <taxon>Pseudomonadati</taxon>
        <taxon>Pseudomonadota</taxon>
        <taxon>Gammaproteobacteria</taxon>
        <taxon>Pseudomonadales</taxon>
        <taxon>Pseudomonadaceae</taxon>
        <taxon>Pseudomonas</taxon>
    </lineage>
</organism>
<sequence>MGTLSVNQNKLQKRLRRLAGEAVADFNMIEEGDKVMVCLSGGKDSYTLLDVLMHFQKVAPIRFDIVAVNMDQKQPGFPEHVLPAYLKELGVEYHIVEKDTHSVVKELIPEGKTTCSLCSRLRRGTLYTFADQIGATKMALGHHRDDIIETFFLNMFFNGALKAMPPKLRADDGRNVVIRPLAYCHEKDIQAYSDLKQFPIIPCNLCGSQENLQRQVVKDMLLDWERKTPGRTESIFRALQNVQPSQLADRKLFDFSQLRIDETAASRFVNVVNI</sequence>
<proteinExistence type="inferred from homology"/>
<dbReference type="EC" id="2.8.1.-" evidence="1"/>
<dbReference type="EMBL" id="AE016853">
    <property type="protein sequence ID" value="AAO55204.1"/>
    <property type="molecule type" value="Genomic_DNA"/>
</dbReference>
<dbReference type="RefSeq" id="NP_791509.1">
    <property type="nucleotide sequence ID" value="NC_004578.1"/>
</dbReference>
<dbReference type="RefSeq" id="WP_011103669.1">
    <property type="nucleotide sequence ID" value="NC_004578.1"/>
</dbReference>
<dbReference type="SMR" id="Q885Z7"/>
<dbReference type="STRING" id="223283.PSPTO_1684"/>
<dbReference type="DNASU" id="1183321"/>
<dbReference type="GeneID" id="1183321"/>
<dbReference type="KEGG" id="pst:PSPTO_1684"/>
<dbReference type="PATRIC" id="fig|223283.9.peg.1710"/>
<dbReference type="eggNOG" id="COG0037">
    <property type="taxonomic scope" value="Bacteria"/>
</dbReference>
<dbReference type="HOGENOM" id="CLU_026481_0_0_6"/>
<dbReference type="OrthoDB" id="9801054at2"/>
<dbReference type="PhylomeDB" id="Q885Z7"/>
<dbReference type="Proteomes" id="UP000002515">
    <property type="component" value="Chromosome"/>
</dbReference>
<dbReference type="GO" id="GO:0005737">
    <property type="term" value="C:cytoplasm"/>
    <property type="evidence" value="ECO:0007669"/>
    <property type="project" value="UniProtKB-SubCell"/>
</dbReference>
<dbReference type="GO" id="GO:0051539">
    <property type="term" value="F:4 iron, 4 sulfur cluster binding"/>
    <property type="evidence" value="ECO:0007669"/>
    <property type="project" value="UniProtKB-UniRule"/>
</dbReference>
<dbReference type="GO" id="GO:0005524">
    <property type="term" value="F:ATP binding"/>
    <property type="evidence" value="ECO:0007669"/>
    <property type="project" value="UniProtKB-UniRule"/>
</dbReference>
<dbReference type="GO" id="GO:0000287">
    <property type="term" value="F:magnesium ion binding"/>
    <property type="evidence" value="ECO:0007669"/>
    <property type="project" value="UniProtKB-UniRule"/>
</dbReference>
<dbReference type="GO" id="GO:0016783">
    <property type="term" value="F:sulfurtransferase activity"/>
    <property type="evidence" value="ECO:0007669"/>
    <property type="project" value="UniProtKB-UniRule"/>
</dbReference>
<dbReference type="GO" id="GO:0000049">
    <property type="term" value="F:tRNA binding"/>
    <property type="evidence" value="ECO:0007669"/>
    <property type="project" value="UniProtKB-KW"/>
</dbReference>
<dbReference type="GO" id="GO:0034227">
    <property type="term" value="P:tRNA thio-modification"/>
    <property type="evidence" value="ECO:0007669"/>
    <property type="project" value="UniProtKB-UniRule"/>
</dbReference>
<dbReference type="CDD" id="cd24138">
    <property type="entry name" value="TtcA-like"/>
    <property type="match status" value="1"/>
</dbReference>
<dbReference type="Gene3D" id="3.40.50.620">
    <property type="entry name" value="HUPs"/>
    <property type="match status" value="1"/>
</dbReference>
<dbReference type="HAMAP" id="MF_01850">
    <property type="entry name" value="TtcA"/>
    <property type="match status" value="1"/>
</dbReference>
<dbReference type="InterPro" id="IPR014729">
    <property type="entry name" value="Rossmann-like_a/b/a_fold"/>
</dbReference>
<dbReference type="InterPro" id="IPR011063">
    <property type="entry name" value="TilS/TtcA_N"/>
</dbReference>
<dbReference type="InterPro" id="IPR012089">
    <property type="entry name" value="tRNA_Cyd_32_2_STrfase"/>
</dbReference>
<dbReference type="InterPro" id="IPR035107">
    <property type="entry name" value="tRNA_thiolation_TtcA_Ctu1"/>
</dbReference>
<dbReference type="NCBIfam" id="NF007972">
    <property type="entry name" value="PRK10696.1"/>
    <property type="match status" value="1"/>
</dbReference>
<dbReference type="PANTHER" id="PTHR43686:SF1">
    <property type="entry name" value="AMINOTRAN_5 DOMAIN-CONTAINING PROTEIN"/>
    <property type="match status" value="1"/>
</dbReference>
<dbReference type="PANTHER" id="PTHR43686">
    <property type="entry name" value="SULFURTRANSFERASE-RELATED"/>
    <property type="match status" value="1"/>
</dbReference>
<dbReference type="Pfam" id="PF01171">
    <property type="entry name" value="ATP_bind_3"/>
    <property type="match status" value="1"/>
</dbReference>
<dbReference type="PIRSF" id="PIRSF004976">
    <property type="entry name" value="ATPase_YdaO"/>
    <property type="match status" value="1"/>
</dbReference>
<dbReference type="SUPFAM" id="SSF52402">
    <property type="entry name" value="Adenine nucleotide alpha hydrolases-like"/>
    <property type="match status" value="1"/>
</dbReference>
<protein>
    <recommendedName>
        <fullName evidence="1">tRNA-cytidine(32) 2-sulfurtransferase</fullName>
        <ecNumber evidence="1">2.8.1.-</ecNumber>
    </recommendedName>
    <alternativeName>
        <fullName evidence="1">Two-thiocytidine biosynthesis protein A</fullName>
    </alternativeName>
    <alternativeName>
        <fullName evidence="1">tRNA 2-thiocytidine biosynthesis protein TtcA</fullName>
    </alternativeName>
</protein>